<accession>B9DRR9</accession>
<evidence type="ECO:0000255" key="1">
    <source>
        <dbReference type="HAMAP-Rule" id="MF_00318"/>
    </source>
</evidence>
<proteinExistence type="inferred from homology"/>
<comment type="function">
    <text evidence="1">Catalyzes the reversible conversion of 2-phosphoglycerate (2-PG) into phosphoenolpyruvate (PEP). It is essential for the degradation of carbohydrates via glycolysis.</text>
</comment>
<comment type="catalytic activity">
    <reaction evidence="1">
        <text>(2R)-2-phosphoglycerate = phosphoenolpyruvate + H2O</text>
        <dbReference type="Rhea" id="RHEA:10164"/>
        <dbReference type="ChEBI" id="CHEBI:15377"/>
        <dbReference type="ChEBI" id="CHEBI:58289"/>
        <dbReference type="ChEBI" id="CHEBI:58702"/>
        <dbReference type="EC" id="4.2.1.11"/>
    </reaction>
</comment>
<comment type="cofactor">
    <cofactor evidence="1">
        <name>Mg(2+)</name>
        <dbReference type="ChEBI" id="CHEBI:18420"/>
    </cofactor>
    <text evidence="1">Binds a second Mg(2+) ion via substrate during catalysis.</text>
</comment>
<comment type="pathway">
    <text evidence="1">Carbohydrate degradation; glycolysis; pyruvate from D-glyceraldehyde 3-phosphate: step 4/5.</text>
</comment>
<comment type="subcellular location">
    <subcellularLocation>
        <location evidence="1">Cytoplasm</location>
    </subcellularLocation>
    <subcellularLocation>
        <location evidence="1">Secreted</location>
    </subcellularLocation>
    <subcellularLocation>
        <location evidence="1">Cell surface</location>
    </subcellularLocation>
    <text evidence="1">Fractions of enolase are present in both the cytoplasm and on the cell surface.</text>
</comment>
<comment type="similarity">
    <text evidence="1">Belongs to the enolase family.</text>
</comment>
<sequence>MSIITDVYAREVLDSRGNPTLEVEVYTESGAFGRGMVPSGASTGEHEAVELRDGDKSRYNGLGTEKAVDNVNNIIAEAIIGYDVRDQQAIDRAMIALDGTPNKGKLGANAILGVSIAVARAAADYLEVPLYNYLGGFNTKVLPTPMMNIVNGGSHSDAPIAFQEFMIMPVGASTFKEALRWGAEVFHALKKILKERGLETAVGDEGGFAPKFEGTEDGVETILKAIEAAGYEAGENGIMIGFDCASSEFYDKERKVYDYTKFEGEGAAVRTSAEQIDYLEELVNKYPIITIEDGMDENDWDGWKALTERLGGRVQLVGDDFFVTNTDYLARGIKEEAANSILIKVNQIGTLTETFEAIEMAKEAGYTAVVSHRSGETEDSTIADIAVATNAGQIKTGSLSRTDRIAKYNQLLRIEDQLGEVAQYKGIKSFYNLKK</sequence>
<reference key="1">
    <citation type="journal article" date="2009" name="BMC Genomics">
        <title>Evidence for niche adaptation in the genome of the bovine pathogen Streptococcus uberis.</title>
        <authorList>
            <person name="Ward P.N."/>
            <person name="Holden M.T.G."/>
            <person name="Leigh J.A."/>
            <person name="Lennard N."/>
            <person name="Bignell A."/>
            <person name="Barron A."/>
            <person name="Clark L."/>
            <person name="Quail M.A."/>
            <person name="Woodward J."/>
            <person name="Barrell B.G."/>
            <person name="Egan S.A."/>
            <person name="Field T.R."/>
            <person name="Maskell D."/>
            <person name="Kehoe M."/>
            <person name="Dowson C.G."/>
            <person name="Chanter N."/>
            <person name="Whatmore A.M."/>
            <person name="Bentley S.D."/>
            <person name="Parkhill J."/>
        </authorList>
    </citation>
    <scope>NUCLEOTIDE SEQUENCE [LARGE SCALE GENOMIC DNA]</scope>
    <source>
        <strain>ATCC BAA-854 / 0140J</strain>
    </source>
</reference>
<name>ENO_STRU0</name>
<feature type="chain" id="PRO_1000133024" description="Enolase">
    <location>
        <begin position="1"/>
        <end position="435"/>
    </location>
</feature>
<feature type="active site" description="Proton donor" evidence="1">
    <location>
        <position position="205"/>
    </location>
</feature>
<feature type="active site" description="Proton acceptor" evidence="1">
    <location>
        <position position="344"/>
    </location>
</feature>
<feature type="binding site" evidence="1">
    <location>
        <position position="163"/>
    </location>
    <ligand>
        <name>(2R)-2-phosphoglycerate</name>
        <dbReference type="ChEBI" id="CHEBI:58289"/>
    </ligand>
</feature>
<feature type="binding site" evidence="1">
    <location>
        <position position="243"/>
    </location>
    <ligand>
        <name>Mg(2+)</name>
        <dbReference type="ChEBI" id="CHEBI:18420"/>
    </ligand>
</feature>
<feature type="binding site" evidence="1">
    <location>
        <position position="292"/>
    </location>
    <ligand>
        <name>Mg(2+)</name>
        <dbReference type="ChEBI" id="CHEBI:18420"/>
    </ligand>
</feature>
<feature type="binding site" evidence="1">
    <location>
        <position position="319"/>
    </location>
    <ligand>
        <name>Mg(2+)</name>
        <dbReference type="ChEBI" id="CHEBI:18420"/>
    </ligand>
</feature>
<feature type="binding site" evidence="1">
    <location>
        <position position="344"/>
    </location>
    <ligand>
        <name>(2R)-2-phosphoglycerate</name>
        <dbReference type="ChEBI" id="CHEBI:58289"/>
    </ligand>
</feature>
<feature type="binding site" evidence="1">
    <location>
        <position position="373"/>
    </location>
    <ligand>
        <name>(2R)-2-phosphoglycerate</name>
        <dbReference type="ChEBI" id="CHEBI:58289"/>
    </ligand>
</feature>
<feature type="binding site" evidence="1">
    <location>
        <position position="374"/>
    </location>
    <ligand>
        <name>(2R)-2-phosphoglycerate</name>
        <dbReference type="ChEBI" id="CHEBI:58289"/>
    </ligand>
</feature>
<feature type="binding site" evidence="1">
    <location>
        <position position="395"/>
    </location>
    <ligand>
        <name>(2R)-2-phosphoglycerate</name>
        <dbReference type="ChEBI" id="CHEBI:58289"/>
    </ligand>
</feature>
<organism>
    <name type="scientific">Streptococcus uberis (strain ATCC BAA-854 / 0140J)</name>
    <dbReference type="NCBI Taxonomy" id="218495"/>
    <lineage>
        <taxon>Bacteria</taxon>
        <taxon>Bacillati</taxon>
        <taxon>Bacillota</taxon>
        <taxon>Bacilli</taxon>
        <taxon>Lactobacillales</taxon>
        <taxon>Streptococcaceae</taxon>
        <taxon>Streptococcus</taxon>
    </lineage>
</organism>
<protein>
    <recommendedName>
        <fullName evidence="1">Enolase</fullName>
        <ecNumber evidence="1">4.2.1.11</ecNumber>
    </recommendedName>
    <alternativeName>
        <fullName evidence="1">2-phospho-D-glycerate hydro-lyase</fullName>
    </alternativeName>
    <alternativeName>
        <fullName evidence="1">2-phosphoglycerate dehydratase</fullName>
    </alternativeName>
</protein>
<dbReference type="EC" id="4.2.1.11" evidence="1"/>
<dbReference type="EMBL" id="AM946015">
    <property type="protein sequence ID" value="CAR41515.1"/>
    <property type="molecule type" value="Genomic_DNA"/>
</dbReference>
<dbReference type="RefSeq" id="WP_012658173.1">
    <property type="nucleotide sequence ID" value="NC_012004.1"/>
</dbReference>
<dbReference type="SMR" id="B9DRR9"/>
<dbReference type="STRING" id="218495.SUB0655"/>
<dbReference type="GeneID" id="93825939"/>
<dbReference type="KEGG" id="sub:SUB0655"/>
<dbReference type="eggNOG" id="COG0148">
    <property type="taxonomic scope" value="Bacteria"/>
</dbReference>
<dbReference type="HOGENOM" id="CLU_031223_2_1_9"/>
<dbReference type="OrthoDB" id="9804716at2"/>
<dbReference type="UniPathway" id="UPA00109">
    <property type="reaction ID" value="UER00187"/>
</dbReference>
<dbReference type="Proteomes" id="UP000000449">
    <property type="component" value="Chromosome"/>
</dbReference>
<dbReference type="GO" id="GO:0009986">
    <property type="term" value="C:cell surface"/>
    <property type="evidence" value="ECO:0007669"/>
    <property type="project" value="UniProtKB-SubCell"/>
</dbReference>
<dbReference type="GO" id="GO:0005576">
    <property type="term" value="C:extracellular region"/>
    <property type="evidence" value="ECO:0007669"/>
    <property type="project" value="UniProtKB-SubCell"/>
</dbReference>
<dbReference type="GO" id="GO:0009274">
    <property type="term" value="C:peptidoglycan-based cell wall"/>
    <property type="evidence" value="ECO:0007669"/>
    <property type="project" value="UniProtKB-ARBA"/>
</dbReference>
<dbReference type="GO" id="GO:0000015">
    <property type="term" value="C:phosphopyruvate hydratase complex"/>
    <property type="evidence" value="ECO:0007669"/>
    <property type="project" value="InterPro"/>
</dbReference>
<dbReference type="GO" id="GO:0000287">
    <property type="term" value="F:magnesium ion binding"/>
    <property type="evidence" value="ECO:0007669"/>
    <property type="project" value="UniProtKB-UniRule"/>
</dbReference>
<dbReference type="GO" id="GO:0004634">
    <property type="term" value="F:phosphopyruvate hydratase activity"/>
    <property type="evidence" value="ECO:0007669"/>
    <property type="project" value="UniProtKB-UniRule"/>
</dbReference>
<dbReference type="GO" id="GO:0006096">
    <property type="term" value="P:glycolytic process"/>
    <property type="evidence" value="ECO:0007669"/>
    <property type="project" value="UniProtKB-UniRule"/>
</dbReference>
<dbReference type="CDD" id="cd03313">
    <property type="entry name" value="enolase"/>
    <property type="match status" value="1"/>
</dbReference>
<dbReference type="FunFam" id="3.20.20.120:FF:000001">
    <property type="entry name" value="Enolase"/>
    <property type="match status" value="1"/>
</dbReference>
<dbReference type="FunFam" id="3.30.390.10:FF:000001">
    <property type="entry name" value="Enolase"/>
    <property type="match status" value="1"/>
</dbReference>
<dbReference type="Gene3D" id="3.20.20.120">
    <property type="entry name" value="Enolase-like C-terminal domain"/>
    <property type="match status" value="1"/>
</dbReference>
<dbReference type="Gene3D" id="3.30.390.10">
    <property type="entry name" value="Enolase-like, N-terminal domain"/>
    <property type="match status" value="1"/>
</dbReference>
<dbReference type="HAMAP" id="MF_00318">
    <property type="entry name" value="Enolase"/>
    <property type="match status" value="1"/>
</dbReference>
<dbReference type="InterPro" id="IPR000941">
    <property type="entry name" value="Enolase"/>
</dbReference>
<dbReference type="InterPro" id="IPR036849">
    <property type="entry name" value="Enolase-like_C_sf"/>
</dbReference>
<dbReference type="InterPro" id="IPR029017">
    <property type="entry name" value="Enolase-like_N"/>
</dbReference>
<dbReference type="InterPro" id="IPR020810">
    <property type="entry name" value="Enolase_C"/>
</dbReference>
<dbReference type="InterPro" id="IPR020809">
    <property type="entry name" value="Enolase_CS"/>
</dbReference>
<dbReference type="InterPro" id="IPR020811">
    <property type="entry name" value="Enolase_N"/>
</dbReference>
<dbReference type="NCBIfam" id="TIGR01060">
    <property type="entry name" value="eno"/>
    <property type="match status" value="1"/>
</dbReference>
<dbReference type="PANTHER" id="PTHR11902">
    <property type="entry name" value="ENOLASE"/>
    <property type="match status" value="1"/>
</dbReference>
<dbReference type="PANTHER" id="PTHR11902:SF1">
    <property type="entry name" value="ENOLASE"/>
    <property type="match status" value="1"/>
</dbReference>
<dbReference type="Pfam" id="PF00113">
    <property type="entry name" value="Enolase_C"/>
    <property type="match status" value="1"/>
</dbReference>
<dbReference type="Pfam" id="PF03952">
    <property type="entry name" value="Enolase_N"/>
    <property type="match status" value="1"/>
</dbReference>
<dbReference type="PIRSF" id="PIRSF001400">
    <property type="entry name" value="Enolase"/>
    <property type="match status" value="1"/>
</dbReference>
<dbReference type="PRINTS" id="PR00148">
    <property type="entry name" value="ENOLASE"/>
</dbReference>
<dbReference type="SFLD" id="SFLDF00002">
    <property type="entry name" value="enolase"/>
    <property type="match status" value="1"/>
</dbReference>
<dbReference type="SFLD" id="SFLDG00178">
    <property type="entry name" value="enolase"/>
    <property type="match status" value="1"/>
</dbReference>
<dbReference type="SMART" id="SM01192">
    <property type="entry name" value="Enolase_C"/>
    <property type="match status" value="1"/>
</dbReference>
<dbReference type="SMART" id="SM01193">
    <property type="entry name" value="Enolase_N"/>
    <property type="match status" value="1"/>
</dbReference>
<dbReference type="SUPFAM" id="SSF51604">
    <property type="entry name" value="Enolase C-terminal domain-like"/>
    <property type="match status" value="1"/>
</dbReference>
<dbReference type="SUPFAM" id="SSF54826">
    <property type="entry name" value="Enolase N-terminal domain-like"/>
    <property type="match status" value="1"/>
</dbReference>
<dbReference type="PROSITE" id="PS00164">
    <property type="entry name" value="ENOLASE"/>
    <property type="match status" value="1"/>
</dbReference>
<gene>
    <name evidence="1" type="primary">eno</name>
    <name type="ordered locus">SUB0655</name>
</gene>
<keyword id="KW-0963">Cytoplasm</keyword>
<keyword id="KW-0324">Glycolysis</keyword>
<keyword id="KW-0456">Lyase</keyword>
<keyword id="KW-0460">Magnesium</keyword>
<keyword id="KW-0479">Metal-binding</keyword>
<keyword id="KW-1185">Reference proteome</keyword>
<keyword id="KW-0964">Secreted</keyword>